<gene>
    <name type="primary">yjaG</name>
    <name type="ordered locus">STM4169</name>
    <name type="ORF">STMF1.23</name>
</gene>
<organism>
    <name type="scientific">Salmonella typhimurium (strain LT2 / SGSC1412 / ATCC 700720)</name>
    <dbReference type="NCBI Taxonomy" id="99287"/>
    <lineage>
        <taxon>Bacteria</taxon>
        <taxon>Pseudomonadati</taxon>
        <taxon>Pseudomonadota</taxon>
        <taxon>Gammaproteobacteria</taxon>
        <taxon>Enterobacterales</taxon>
        <taxon>Enterobacteriaceae</taxon>
        <taxon>Salmonella</taxon>
    </lineage>
</organism>
<protein>
    <recommendedName>
        <fullName>Uncharacterized protein YjaG</fullName>
    </recommendedName>
</protein>
<accession>P0A1U4</accession>
<accession>Q9L9I2</accession>
<comment type="similarity">
    <text evidence="1">To H.influenzae HI_0431.</text>
</comment>
<name>YJAG_SALTY</name>
<evidence type="ECO:0000305" key="1"/>
<keyword id="KW-1185">Reference proteome</keyword>
<dbReference type="EMBL" id="AF170176">
    <property type="protein sequence ID" value="AAF33519.1"/>
    <property type="molecule type" value="Genomic_DNA"/>
</dbReference>
<dbReference type="EMBL" id="AE006468">
    <property type="protein sequence ID" value="AAL22997.1"/>
    <property type="molecule type" value="Genomic_DNA"/>
</dbReference>
<dbReference type="RefSeq" id="NP_463038.1">
    <property type="nucleotide sequence ID" value="NC_003197.2"/>
</dbReference>
<dbReference type="RefSeq" id="WP_000940092.1">
    <property type="nucleotide sequence ID" value="NC_003197.2"/>
</dbReference>
<dbReference type="SMR" id="P0A1U4"/>
<dbReference type="STRING" id="99287.STM4169"/>
<dbReference type="PaxDb" id="99287-STM4169"/>
<dbReference type="GeneID" id="1255695"/>
<dbReference type="KEGG" id="stm:STM4169"/>
<dbReference type="PATRIC" id="fig|99287.12.peg.4383"/>
<dbReference type="HOGENOM" id="CLU_096082_0_0_6"/>
<dbReference type="OMA" id="FYGVYPA"/>
<dbReference type="PhylomeDB" id="P0A1U4"/>
<dbReference type="BioCyc" id="SENT99287:STM4169-MONOMER"/>
<dbReference type="Proteomes" id="UP000001014">
    <property type="component" value="Chromosome"/>
</dbReference>
<dbReference type="FunFam" id="1.20.1590.10:FF:000001">
    <property type="entry name" value="DUF416 family protein"/>
    <property type="match status" value="1"/>
</dbReference>
<dbReference type="Gene3D" id="1.20.1590.10">
    <property type="entry name" value="YP_001051499.1 domain like"/>
    <property type="match status" value="1"/>
</dbReference>
<dbReference type="InterPro" id="IPR007338">
    <property type="entry name" value="DUF416"/>
</dbReference>
<dbReference type="InterPro" id="IPR023381">
    <property type="entry name" value="YP001051499.1-like_dom_sf"/>
</dbReference>
<dbReference type="Pfam" id="PF04222">
    <property type="entry name" value="DUF416"/>
    <property type="match status" value="1"/>
</dbReference>
<reference key="1">
    <citation type="journal article" date="2001" name="Nature">
        <title>Complete genome sequence of Salmonella enterica serovar Typhimurium LT2.</title>
        <authorList>
            <person name="McClelland M."/>
            <person name="Sanderson K.E."/>
            <person name="Spieth J."/>
            <person name="Clifton S.W."/>
            <person name="Latreille P."/>
            <person name="Courtney L."/>
            <person name="Porwollik S."/>
            <person name="Ali J."/>
            <person name="Dante M."/>
            <person name="Du F."/>
            <person name="Hou S."/>
            <person name="Layman D."/>
            <person name="Leonard S."/>
            <person name="Nguyen C."/>
            <person name="Scott K."/>
            <person name="Holmes A."/>
            <person name="Grewal N."/>
            <person name="Mulvaney E."/>
            <person name="Ryan E."/>
            <person name="Sun H."/>
            <person name="Florea L."/>
            <person name="Miller W."/>
            <person name="Stoneking T."/>
            <person name="Nhan M."/>
            <person name="Waterston R."/>
            <person name="Wilson R.K."/>
        </authorList>
    </citation>
    <scope>NUCLEOTIDE SEQUENCE [LARGE SCALE GENOMIC DNA]</scope>
    <source>
        <strain>LT2 / SGSC1412 / ATCC 700720</strain>
    </source>
</reference>
<feature type="chain" id="PRO_0000169704" description="Uncharacterized protein YjaG">
    <location>
        <begin position="1"/>
        <end position="196"/>
    </location>
</feature>
<sequence length="196" mass="22704">MLQNPIHLRLERLESWQHVTFMACLCERMYPNYAMFCKQTEFGDGQIYRRILDLIWETLTVKDAKVNFDSQLEKFEEAIPAADDYDLYGVYPAIDACVALSELMHSRLSGETLEHAIEVSKTSITTVAMLEMTQAGREMTDEELKTNPAVEQEWDIQWEIFRLLADCEERDIELIKGLRADLREAGESNIGINFQQ</sequence>
<proteinExistence type="predicted"/>